<evidence type="ECO:0000250" key="1"/>
<evidence type="ECO:0000250" key="2">
    <source>
        <dbReference type="UniProtKB" id="P54753"/>
    </source>
</evidence>
<evidence type="ECO:0000250" key="3">
    <source>
        <dbReference type="UniProtKB" id="P54762"/>
    </source>
</evidence>
<evidence type="ECO:0000250" key="4">
    <source>
        <dbReference type="UniProtKB" id="Q8CBF3"/>
    </source>
</evidence>
<evidence type="ECO:0000255" key="5"/>
<evidence type="ECO:0000255" key="6">
    <source>
        <dbReference type="PROSITE-ProRule" id="PRU00159"/>
    </source>
</evidence>
<evidence type="ECO:0000255" key="7">
    <source>
        <dbReference type="PROSITE-ProRule" id="PRU00184"/>
    </source>
</evidence>
<evidence type="ECO:0000255" key="8">
    <source>
        <dbReference type="PROSITE-ProRule" id="PRU00316"/>
    </source>
</evidence>
<evidence type="ECO:0000255" key="9">
    <source>
        <dbReference type="PROSITE-ProRule" id="PRU00883"/>
    </source>
</evidence>
<evidence type="ECO:0000255" key="10">
    <source>
        <dbReference type="PROSITE-ProRule" id="PRU10028"/>
    </source>
</evidence>
<evidence type="ECO:0000269" key="11">
    <source>
    </source>
</evidence>
<reference key="1">
    <citation type="journal article" date="1991" name="Mol. Cell. Biol.">
        <title>Characterization of elk, a brain-specific receptor tyrosine kinase.</title>
        <authorList>
            <person name="Lhotak V."/>
            <person name="Greer P."/>
            <person name="Letwin K."/>
            <person name="Pawson T."/>
        </authorList>
    </citation>
    <scope>NUCLEOTIDE SEQUENCE [MRNA]</scope>
    <scope>AUTOPHOSPHORYLATION</scope>
    <scope>TISSUE SPECIFICITY</scope>
    <source>
        <strain>Wistar</strain>
        <tissue>Brain</tissue>
    </source>
</reference>
<reference key="2">
    <citation type="journal article" date="1988" name="Oncogene">
        <title>Novel protein-tyrosine kinase cDNAs related to fps/fes and eph cloned using anti-phosphotyrosine antibody.</title>
        <authorList>
            <person name="Letwin K."/>
            <person name="Yee S.P."/>
            <person name="Pawson T."/>
        </authorList>
    </citation>
    <scope>NUCLEOTIDE SEQUENCE [MRNA] OF 605-984</scope>
    <source>
        <strain>Wistar</strain>
        <tissue>Brain</tissue>
    </source>
</reference>
<protein>
    <recommendedName>
        <fullName>Ephrin type-B receptor 1</fullName>
        <ecNumber>2.7.10.1</ecNumber>
    </recommendedName>
    <alternativeName>
        <fullName>ELK</fullName>
    </alternativeName>
    <alternativeName>
        <fullName>Tyrosine-protein kinase receptor EPH-2</fullName>
    </alternativeName>
</protein>
<feature type="signal peptide" evidence="5">
    <location>
        <begin position="1"/>
        <end position="17"/>
    </location>
</feature>
<feature type="chain" id="PRO_0000016825" description="Ephrin type-B receptor 1">
    <location>
        <begin position="18"/>
        <end position="984"/>
    </location>
</feature>
<feature type="topological domain" description="Extracellular" evidence="5">
    <location>
        <begin position="18"/>
        <end position="540"/>
    </location>
</feature>
<feature type="transmembrane region" description="Helical" evidence="5">
    <location>
        <begin position="541"/>
        <end position="563"/>
    </location>
</feature>
<feature type="topological domain" description="Cytoplasmic" evidence="5">
    <location>
        <begin position="564"/>
        <end position="984"/>
    </location>
</feature>
<feature type="domain" description="Eph LBD" evidence="9">
    <location>
        <begin position="19"/>
        <end position="201"/>
    </location>
</feature>
<feature type="domain" description="Fibronectin type-III 1" evidence="8">
    <location>
        <begin position="322"/>
        <end position="432"/>
    </location>
</feature>
<feature type="domain" description="Fibronectin type-III 2" evidence="8">
    <location>
        <begin position="433"/>
        <end position="528"/>
    </location>
</feature>
<feature type="domain" description="Protein kinase" evidence="6">
    <location>
        <begin position="619"/>
        <end position="882"/>
    </location>
</feature>
<feature type="domain" description="SAM" evidence="7">
    <location>
        <begin position="911"/>
        <end position="975"/>
    </location>
</feature>
<feature type="short sequence motif" description="PDZ-binding" evidence="5">
    <location>
        <begin position="982"/>
        <end position="984"/>
    </location>
</feature>
<feature type="active site" description="Proton acceptor" evidence="6 10">
    <location>
        <position position="744"/>
    </location>
</feature>
<feature type="binding site" evidence="6">
    <location>
        <begin position="625"/>
        <end position="633"/>
    </location>
    <ligand>
        <name>ATP</name>
        <dbReference type="ChEBI" id="CHEBI:30616"/>
    </ligand>
</feature>
<feature type="binding site" evidence="6">
    <location>
        <position position="651"/>
    </location>
    <ligand>
        <name>ATP</name>
        <dbReference type="ChEBI" id="CHEBI:30616"/>
    </ligand>
</feature>
<feature type="modified residue" description="Phosphotyrosine" evidence="2">
    <location>
        <position position="600"/>
    </location>
</feature>
<feature type="modified residue" description="Phosphotyrosine; by autocatalysis" evidence="1">
    <location>
        <position position="928"/>
    </location>
</feature>
<feature type="glycosylation site" description="N-linked (GlcNAc...) asparagine" evidence="5">
    <location>
        <position position="334"/>
    </location>
</feature>
<feature type="glycosylation site" description="N-linked (GlcNAc...) asparagine" evidence="5">
    <location>
        <position position="426"/>
    </location>
</feature>
<feature type="glycosylation site" description="N-linked (GlcNAc...) asparagine" evidence="5">
    <location>
        <position position="480"/>
    </location>
</feature>
<sequence length="984" mass="109883">MALDCLLLFLLASAVAAMEETLMDTRTATAELGWTANPASGWEEVSGYDENLNTIRTYQVCNVFEPNQNNWLLTTFINRRGAHRIYTEMRFTVRDCSSLPNVPGSCKETFNLYYYETDSVIATKKSAFWSEAPYLKVDTIAADESFSQVDFGGRLMKVNTEVRSFGPLTRNGFYLAFQDYGACMSLLSVRVFFKKCPSIVQNFAVFPETMTGAESTSLVIARGTCIPNAEEVDVPIKLYCNGDGEWMVPIGRCTCKAGYEPENSVACKACPAGTFKASQEAEGCSHCPSNSRSPSEASPICTCRTGYYRADFDPPEVACTSVPSGPRNVISIVNETSIILEWHPPRETGGRDDVTYNIICKKCRADRRSCSRCDDNVEFVPRQLGLTECRVSISSLWAHTPYTFDIQAINGVSSKSPFPPQHVSVNITTNQAAPSTVPIMHQVSATMRSITLSWPQPEQPNGIILDYEIRYYEKEHNEFNSSMARSQTNTARIDGLRPGMVYVVQVRARTVAGYGKFSGKMCFQTLTDDDYKSELREQLPLIAGSAAAGVVFVVSLVAISIVCSRKRAYSKEAVYSDKLQHYSTGRGSPGMKIYIDPFTYEDPNEAVREFAKEIDVSFVKIEEVIGAGEFGEVYKGRLKLPGKREIYVAIKTLKAGYSEKQRRDFLSEASIMGQFDHPNIIRLEGVVTKSRPVMIITEFMENGALDSFLRQNDGQFTVIQLVGMLRGIAAGMKYLSEMNYVHRDLAARNILVNSNLVCKVSDFGLSRYLQDDTSDPTYTSSLGGKIPVRWTAPEAIAYRKFTSASDVWSYGIVMWEVMSFGERPYWDMSNQDVINAIEQDYRLPPPMDCPAALHQLMLDCWQKDRNSRPRFAEIVNTLDKMIRNPASLKTVATITAVPSQPLLDRSIPDFTAFTTVDDWLSAIKMVQYRDSFLTAGFTSLQLVTQMTSEDLLRIGVTLAGHQKKILSSIHSMRVQMNQSPSVMA</sequence>
<accession>P09759</accession>
<dbReference type="EC" id="2.7.10.1"/>
<dbReference type="EMBL" id="M59814">
    <property type="status" value="NOT_ANNOTATED_CDS"/>
    <property type="molecule type" value="mRNA"/>
</dbReference>
<dbReference type="EMBL" id="X13411">
    <property type="protein sequence ID" value="CAA31777.1"/>
    <property type="molecule type" value="mRNA"/>
</dbReference>
<dbReference type="PIR" id="A39753">
    <property type="entry name" value="A39753"/>
</dbReference>
<dbReference type="RefSeq" id="NP_001097998.1">
    <property type="nucleotide sequence ID" value="NM_001104528.1"/>
</dbReference>
<dbReference type="RefSeq" id="XP_017450939.1">
    <property type="nucleotide sequence ID" value="XM_017595450.1"/>
</dbReference>
<dbReference type="SMR" id="P09759"/>
<dbReference type="BioGRID" id="246515">
    <property type="interactions" value="2"/>
</dbReference>
<dbReference type="CORUM" id="P09759"/>
<dbReference type="DIP" id="DIP-138N"/>
<dbReference type="FunCoup" id="P09759">
    <property type="interactions" value="2738"/>
</dbReference>
<dbReference type="STRING" id="10116.ENSRNOP00000010634"/>
<dbReference type="BindingDB" id="P09759"/>
<dbReference type="ChEMBL" id="CHEMBL4739675"/>
<dbReference type="GuidetoPHARMACOLOGY" id="1830"/>
<dbReference type="GlyCosmos" id="P09759">
    <property type="glycosylation" value="3 sites, No reported glycans"/>
</dbReference>
<dbReference type="GlyGen" id="P09759">
    <property type="glycosylation" value="3 sites"/>
</dbReference>
<dbReference type="iPTMnet" id="P09759"/>
<dbReference type="PhosphoSitePlus" id="P09759"/>
<dbReference type="SwissPalm" id="P09759"/>
<dbReference type="PaxDb" id="10116-ENSRNOP00000010634"/>
<dbReference type="Ensembl" id="ENSRNOT00000010634.6">
    <property type="protein sequence ID" value="ENSRNOP00000010634.7"/>
    <property type="gene ID" value="ENSRNOG00000007865.7"/>
</dbReference>
<dbReference type="GeneID" id="24338"/>
<dbReference type="KEGG" id="rno:24338"/>
<dbReference type="UCSC" id="RGD:2556">
    <property type="organism name" value="rat"/>
</dbReference>
<dbReference type="AGR" id="RGD:2556"/>
<dbReference type="CTD" id="2047"/>
<dbReference type="RGD" id="2556">
    <property type="gene designation" value="Ephb1"/>
</dbReference>
<dbReference type="eggNOG" id="KOG0196">
    <property type="taxonomic scope" value="Eukaryota"/>
</dbReference>
<dbReference type="GeneTree" id="ENSGT00940000155297"/>
<dbReference type="HOGENOM" id="CLU_000288_141_4_1"/>
<dbReference type="InParanoid" id="P09759"/>
<dbReference type="OMA" id="AVAAMEX"/>
<dbReference type="OrthoDB" id="4062651at2759"/>
<dbReference type="PhylomeDB" id="P09759"/>
<dbReference type="TreeFam" id="TF315608"/>
<dbReference type="BRENDA" id="2.7.10.1">
    <property type="organism ID" value="5301"/>
</dbReference>
<dbReference type="Reactome" id="R-RNO-2682334">
    <property type="pathway name" value="EPH-Ephrin signaling"/>
</dbReference>
<dbReference type="Reactome" id="R-RNO-3928662">
    <property type="pathway name" value="EPHB-mediated forward signaling"/>
</dbReference>
<dbReference type="Reactome" id="R-RNO-3928664">
    <property type="pathway name" value="Ephrin signaling"/>
</dbReference>
<dbReference type="Reactome" id="R-RNO-3928665">
    <property type="pathway name" value="EPH-ephrin mediated repulsion of cells"/>
</dbReference>
<dbReference type="PRO" id="PR:P09759"/>
<dbReference type="Proteomes" id="UP000002494">
    <property type="component" value="Chromosome 8"/>
</dbReference>
<dbReference type="Bgee" id="ENSRNOG00000007865">
    <property type="expression patterns" value="Expressed in brain and 17 other cell types or tissues"/>
</dbReference>
<dbReference type="GO" id="GO:0030424">
    <property type="term" value="C:axon"/>
    <property type="evidence" value="ECO:0000266"/>
    <property type="project" value="RGD"/>
</dbReference>
<dbReference type="GO" id="GO:0005737">
    <property type="term" value="C:cytoplasm"/>
    <property type="evidence" value="ECO:0000266"/>
    <property type="project" value="RGD"/>
</dbReference>
<dbReference type="GO" id="GO:0005829">
    <property type="term" value="C:cytosol"/>
    <property type="evidence" value="ECO:0007669"/>
    <property type="project" value="Ensembl"/>
</dbReference>
<dbReference type="GO" id="GO:0030425">
    <property type="term" value="C:dendrite"/>
    <property type="evidence" value="ECO:0000318"/>
    <property type="project" value="GO_Central"/>
</dbReference>
<dbReference type="GO" id="GO:0031901">
    <property type="term" value="C:early endosome membrane"/>
    <property type="evidence" value="ECO:0000250"/>
    <property type="project" value="UniProtKB"/>
</dbReference>
<dbReference type="GO" id="GO:0005783">
    <property type="term" value="C:endoplasmic reticulum"/>
    <property type="evidence" value="ECO:0007669"/>
    <property type="project" value="Ensembl"/>
</dbReference>
<dbReference type="GO" id="GO:0032433">
    <property type="term" value="C:filopodium tip"/>
    <property type="evidence" value="ECO:0000266"/>
    <property type="project" value="RGD"/>
</dbReference>
<dbReference type="GO" id="GO:0098978">
    <property type="term" value="C:glutamatergic synapse"/>
    <property type="evidence" value="ECO:0000266"/>
    <property type="project" value="RGD"/>
</dbReference>
<dbReference type="GO" id="GO:0016020">
    <property type="term" value="C:membrane"/>
    <property type="evidence" value="ECO:0000266"/>
    <property type="project" value="RGD"/>
</dbReference>
<dbReference type="GO" id="GO:0045121">
    <property type="term" value="C:membrane raft"/>
    <property type="evidence" value="ECO:0000266"/>
    <property type="project" value="RGD"/>
</dbReference>
<dbReference type="GO" id="GO:0005886">
    <property type="term" value="C:plasma membrane"/>
    <property type="evidence" value="ECO:0000250"/>
    <property type="project" value="UniProtKB"/>
</dbReference>
<dbReference type="GO" id="GO:0005524">
    <property type="term" value="F:ATP binding"/>
    <property type="evidence" value="ECO:0007669"/>
    <property type="project" value="UniProtKB-KW"/>
</dbReference>
<dbReference type="GO" id="GO:0008046">
    <property type="term" value="F:axon guidance receptor activity"/>
    <property type="evidence" value="ECO:0000266"/>
    <property type="project" value="RGD"/>
</dbReference>
<dbReference type="GO" id="GO:0004713">
    <property type="term" value="F:protein tyrosine kinase activity"/>
    <property type="evidence" value="ECO:0000314"/>
    <property type="project" value="UniProtKB"/>
</dbReference>
<dbReference type="GO" id="GO:0044877">
    <property type="term" value="F:protein-containing complex binding"/>
    <property type="evidence" value="ECO:0000266"/>
    <property type="project" value="RGD"/>
</dbReference>
<dbReference type="GO" id="GO:0005005">
    <property type="term" value="F:transmembrane-ephrin receptor activity"/>
    <property type="evidence" value="ECO:0000250"/>
    <property type="project" value="UniProtKB"/>
</dbReference>
<dbReference type="GO" id="GO:0001525">
    <property type="term" value="P:angiogenesis"/>
    <property type="evidence" value="ECO:0000250"/>
    <property type="project" value="UniProtKB"/>
</dbReference>
<dbReference type="GO" id="GO:0007411">
    <property type="term" value="P:axon guidance"/>
    <property type="evidence" value="ECO:0000250"/>
    <property type="project" value="UniProtKB"/>
</dbReference>
<dbReference type="GO" id="GO:0048593">
    <property type="term" value="P:camera-type eye morphogenesis"/>
    <property type="evidence" value="ECO:0000266"/>
    <property type="project" value="RGD"/>
</dbReference>
<dbReference type="GO" id="GO:0060326">
    <property type="term" value="P:cell chemotaxis"/>
    <property type="evidence" value="ECO:0000250"/>
    <property type="project" value="UniProtKB"/>
</dbReference>
<dbReference type="GO" id="GO:0031589">
    <property type="term" value="P:cell-substrate adhesion"/>
    <property type="evidence" value="ECO:0000250"/>
    <property type="project" value="UniProtKB"/>
</dbReference>
<dbReference type="GO" id="GO:0021952">
    <property type="term" value="P:central nervous system projection neuron axonogenesis"/>
    <property type="evidence" value="ECO:0000250"/>
    <property type="project" value="UniProtKB"/>
</dbReference>
<dbReference type="GO" id="GO:0021545">
    <property type="term" value="P:cranial nerve development"/>
    <property type="evidence" value="ECO:0000266"/>
    <property type="project" value="RGD"/>
</dbReference>
<dbReference type="GO" id="GO:0060996">
    <property type="term" value="P:dendritic spine development"/>
    <property type="evidence" value="ECO:0000316"/>
    <property type="project" value="MGI"/>
</dbReference>
<dbReference type="GO" id="GO:0060997">
    <property type="term" value="P:dendritic spine morphogenesis"/>
    <property type="evidence" value="ECO:0000250"/>
    <property type="project" value="UniProtKB"/>
</dbReference>
<dbReference type="GO" id="GO:0050965">
    <property type="term" value="P:detection of temperature stimulus involved in sensory perception of pain"/>
    <property type="evidence" value="ECO:0000250"/>
    <property type="project" value="UniProtKB"/>
</dbReference>
<dbReference type="GO" id="GO:0048013">
    <property type="term" value="P:ephrin receptor signaling pathway"/>
    <property type="evidence" value="ECO:0000250"/>
    <property type="project" value="UniProtKB"/>
</dbReference>
<dbReference type="GO" id="GO:0030010">
    <property type="term" value="P:establishment of cell polarity"/>
    <property type="evidence" value="ECO:0000250"/>
    <property type="project" value="UniProtKB"/>
</dbReference>
<dbReference type="GO" id="GO:0021934">
    <property type="term" value="P:hindbrain tangential cell migration"/>
    <property type="evidence" value="ECO:0000315"/>
    <property type="project" value="RGD"/>
</dbReference>
<dbReference type="GO" id="GO:0001771">
    <property type="term" value="P:immunological synapse formation"/>
    <property type="evidence" value="ECO:0000316"/>
    <property type="project" value="MGI"/>
</dbReference>
<dbReference type="GO" id="GO:0050804">
    <property type="term" value="P:modulation of chemical synaptic transmission"/>
    <property type="evidence" value="ECO:0000266"/>
    <property type="project" value="RGD"/>
</dbReference>
<dbReference type="GO" id="GO:1902725">
    <property type="term" value="P:negative regulation of satellite cell differentiation"/>
    <property type="evidence" value="ECO:0000250"/>
    <property type="project" value="UniProtKB"/>
</dbReference>
<dbReference type="GO" id="GO:1902723">
    <property type="term" value="P:negative regulation of skeletal muscle satellite cell proliferation"/>
    <property type="evidence" value="ECO:0000250"/>
    <property type="project" value="UniProtKB"/>
</dbReference>
<dbReference type="GO" id="GO:0061351">
    <property type="term" value="P:neural precursor cell proliferation"/>
    <property type="evidence" value="ECO:0000250"/>
    <property type="project" value="UniProtKB"/>
</dbReference>
<dbReference type="GO" id="GO:0022008">
    <property type="term" value="P:neurogenesis"/>
    <property type="evidence" value="ECO:0000250"/>
    <property type="project" value="UniProtKB"/>
</dbReference>
<dbReference type="GO" id="GO:0021631">
    <property type="term" value="P:optic nerve morphogenesis"/>
    <property type="evidence" value="ECO:0000266"/>
    <property type="project" value="RGD"/>
</dbReference>
<dbReference type="GO" id="GO:0051965">
    <property type="term" value="P:positive regulation of synapse assembly"/>
    <property type="evidence" value="ECO:0000250"/>
    <property type="project" value="UniProtKB"/>
</dbReference>
<dbReference type="GO" id="GO:0070372">
    <property type="term" value="P:regulation of ERK1 and ERK2 cascade"/>
    <property type="evidence" value="ECO:0000250"/>
    <property type="project" value="UniProtKB"/>
</dbReference>
<dbReference type="GO" id="GO:0046328">
    <property type="term" value="P:regulation of JNK cascade"/>
    <property type="evidence" value="ECO:0000250"/>
    <property type="project" value="UniProtKB"/>
</dbReference>
<dbReference type="GO" id="GO:0031290">
    <property type="term" value="P:retinal ganglion cell axon guidance"/>
    <property type="evidence" value="ECO:0000250"/>
    <property type="project" value="UniProtKB"/>
</dbReference>
<dbReference type="GO" id="GO:0014719">
    <property type="term" value="P:skeletal muscle satellite cell activation"/>
    <property type="evidence" value="ECO:0000250"/>
    <property type="project" value="UniProtKB"/>
</dbReference>
<dbReference type="CDD" id="cd10476">
    <property type="entry name" value="EphR_LBD_B1"/>
    <property type="match status" value="1"/>
</dbReference>
<dbReference type="CDD" id="cd00063">
    <property type="entry name" value="FN3"/>
    <property type="match status" value="2"/>
</dbReference>
<dbReference type="CDD" id="cd05065">
    <property type="entry name" value="PTKc_EphR_B"/>
    <property type="match status" value="1"/>
</dbReference>
<dbReference type="CDD" id="cd09551">
    <property type="entry name" value="SAM_EPH-B1"/>
    <property type="match status" value="1"/>
</dbReference>
<dbReference type="FunFam" id="2.60.40.10:FF:000041">
    <property type="entry name" value="ephrin type-A receptor 3"/>
    <property type="match status" value="1"/>
</dbReference>
<dbReference type="FunFam" id="1.10.150.50:FF:000001">
    <property type="entry name" value="Ephrin type-A receptor 5"/>
    <property type="match status" value="1"/>
</dbReference>
<dbReference type="FunFam" id="2.10.50.10:FF:000001">
    <property type="entry name" value="Ephrin type-A receptor 5"/>
    <property type="match status" value="1"/>
</dbReference>
<dbReference type="FunFam" id="2.60.40.1770:FF:000001">
    <property type="entry name" value="Ephrin type-A receptor 5"/>
    <property type="match status" value="1"/>
</dbReference>
<dbReference type="FunFam" id="3.30.200.20:FF:000001">
    <property type="entry name" value="Ephrin type-A receptor 5"/>
    <property type="match status" value="1"/>
</dbReference>
<dbReference type="FunFam" id="1.10.510.10:FF:000015">
    <property type="entry name" value="Ephrin type-B receptor 2"/>
    <property type="match status" value="1"/>
</dbReference>
<dbReference type="FunFam" id="2.60.120.260:FF:000004">
    <property type="entry name" value="Ephrin type-B receptor 2"/>
    <property type="match status" value="1"/>
</dbReference>
<dbReference type="FunFam" id="2.60.40.10:FF:000110">
    <property type="entry name" value="Ephrin type-B receptor 2"/>
    <property type="match status" value="1"/>
</dbReference>
<dbReference type="Gene3D" id="2.60.40.1770">
    <property type="entry name" value="ephrin a2 ectodomain"/>
    <property type="match status" value="1"/>
</dbReference>
<dbReference type="Gene3D" id="2.60.120.260">
    <property type="entry name" value="Galactose-binding domain-like"/>
    <property type="match status" value="1"/>
</dbReference>
<dbReference type="Gene3D" id="2.60.40.10">
    <property type="entry name" value="Immunoglobulins"/>
    <property type="match status" value="2"/>
</dbReference>
<dbReference type="Gene3D" id="3.30.200.20">
    <property type="entry name" value="Phosphorylase Kinase, domain 1"/>
    <property type="match status" value="1"/>
</dbReference>
<dbReference type="Gene3D" id="1.10.150.50">
    <property type="entry name" value="Transcription Factor, Ets-1"/>
    <property type="match status" value="1"/>
</dbReference>
<dbReference type="Gene3D" id="1.10.510.10">
    <property type="entry name" value="Transferase(Phosphotransferase) domain 1"/>
    <property type="match status" value="1"/>
</dbReference>
<dbReference type="Gene3D" id="2.10.50.10">
    <property type="entry name" value="Tumor Necrosis Factor Receptor, subunit A, domain 2"/>
    <property type="match status" value="1"/>
</dbReference>
<dbReference type="InterPro" id="IPR027936">
    <property type="entry name" value="Eph_TM"/>
</dbReference>
<dbReference type="InterPro" id="IPR034231">
    <property type="entry name" value="EphB1_rcpt_lig-bd"/>
</dbReference>
<dbReference type="InterPro" id="IPR042819">
    <property type="entry name" value="EphB1_SAM"/>
</dbReference>
<dbReference type="InterPro" id="IPR001090">
    <property type="entry name" value="Ephrin_rcpt_lig-bd_dom"/>
</dbReference>
<dbReference type="InterPro" id="IPR050449">
    <property type="entry name" value="Ephrin_rcpt_TKs"/>
</dbReference>
<dbReference type="InterPro" id="IPR003961">
    <property type="entry name" value="FN3_dom"/>
</dbReference>
<dbReference type="InterPro" id="IPR036116">
    <property type="entry name" value="FN3_sf"/>
</dbReference>
<dbReference type="InterPro" id="IPR008979">
    <property type="entry name" value="Galactose-bd-like_sf"/>
</dbReference>
<dbReference type="InterPro" id="IPR009030">
    <property type="entry name" value="Growth_fac_rcpt_cys_sf"/>
</dbReference>
<dbReference type="InterPro" id="IPR013783">
    <property type="entry name" value="Ig-like_fold"/>
</dbReference>
<dbReference type="InterPro" id="IPR011009">
    <property type="entry name" value="Kinase-like_dom_sf"/>
</dbReference>
<dbReference type="InterPro" id="IPR000719">
    <property type="entry name" value="Prot_kinase_dom"/>
</dbReference>
<dbReference type="InterPro" id="IPR017441">
    <property type="entry name" value="Protein_kinase_ATP_BS"/>
</dbReference>
<dbReference type="InterPro" id="IPR001660">
    <property type="entry name" value="SAM"/>
</dbReference>
<dbReference type="InterPro" id="IPR013761">
    <property type="entry name" value="SAM/pointed_sf"/>
</dbReference>
<dbReference type="InterPro" id="IPR001245">
    <property type="entry name" value="Ser-Thr/Tyr_kinase_cat_dom"/>
</dbReference>
<dbReference type="InterPro" id="IPR008266">
    <property type="entry name" value="Tyr_kinase_AS"/>
</dbReference>
<dbReference type="InterPro" id="IPR020635">
    <property type="entry name" value="Tyr_kinase_cat_dom"/>
</dbReference>
<dbReference type="InterPro" id="IPR016257">
    <property type="entry name" value="Tyr_kinase_ephrin_rcpt"/>
</dbReference>
<dbReference type="InterPro" id="IPR001426">
    <property type="entry name" value="Tyr_kinase_rcpt_V_CS"/>
</dbReference>
<dbReference type="PANTHER" id="PTHR46877">
    <property type="entry name" value="EPH RECEPTOR A5"/>
    <property type="match status" value="1"/>
</dbReference>
<dbReference type="PANTHER" id="PTHR46877:SF17">
    <property type="entry name" value="EPHRIN TYPE-B RECEPTOR 1"/>
    <property type="match status" value="1"/>
</dbReference>
<dbReference type="Pfam" id="PF14575">
    <property type="entry name" value="EphA2_TM"/>
    <property type="match status" value="1"/>
</dbReference>
<dbReference type="Pfam" id="PF01404">
    <property type="entry name" value="Ephrin_lbd"/>
    <property type="match status" value="1"/>
</dbReference>
<dbReference type="Pfam" id="PF00041">
    <property type="entry name" value="fn3"/>
    <property type="match status" value="2"/>
</dbReference>
<dbReference type="Pfam" id="PF07714">
    <property type="entry name" value="PK_Tyr_Ser-Thr"/>
    <property type="match status" value="1"/>
</dbReference>
<dbReference type="Pfam" id="PF00536">
    <property type="entry name" value="SAM_1"/>
    <property type="match status" value="1"/>
</dbReference>
<dbReference type="PIRSF" id="PIRSF000666">
    <property type="entry name" value="TyrPK_ephrin_receptor"/>
    <property type="match status" value="1"/>
</dbReference>
<dbReference type="PRINTS" id="PR00014">
    <property type="entry name" value="FNTYPEIII"/>
</dbReference>
<dbReference type="PRINTS" id="PR00109">
    <property type="entry name" value="TYRKINASE"/>
</dbReference>
<dbReference type="SMART" id="SM00615">
    <property type="entry name" value="EPH_lbd"/>
    <property type="match status" value="1"/>
</dbReference>
<dbReference type="SMART" id="SM01411">
    <property type="entry name" value="Ephrin_rec_like"/>
    <property type="match status" value="1"/>
</dbReference>
<dbReference type="SMART" id="SM00060">
    <property type="entry name" value="FN3"/>
    <property type="match status" value="2"/>
</dbReference>
<dbReference type="SMART" id="SM00454">
    <property type="entry name" value="SAM"/>
    <property type="match status" value="1"/>
</dbReference>
<dbReference type="SMART" id="SM00219">
    <property type="entry name" value="TyrKc"/>
    <property type="match status" value="1"/>
</dbReference>
<dbReference type="SUPFAM" id="SSF49265">
    <property type="entry name" value="Fibronectin type III"/>
    <property type="match status" value="1"/>
</dbReference>
<dbReference type="SUPFAM" id="SSF49785">
    <property type="entry name" value="Galactose-binding domain-like"/>
    <property type="match status" value="1"/>
</dbReference>
<dbReference type="SUPFAM" id="SSF57184">
    <property type="entry name" value="Growth factor receptor domain"/>
    <property type="match status" value="1"/>
</dbReference>
<dbReference type="SUPFAM" id="SSF56112">
    <property type="entry name" value="Protein kinase-like (PK-like)"/>
    <property type="match status" value="1"/>
</dbReference>
<dbReference type="SUPFAM" id="SSF47769">
    <property type="entry name" value="SAM/Pointed domain"/>
    <property type="match status" value="1"/>
</dbReference>
<dbReference type="PROSITE" id="PS01186">
    <property type="entry name" value="EGF_2"/>
    <property type="match status" value="1"/>
</dbReference>
<dbReference type="PROSITE" id="PS51550">
    <property type="entry name" value="EPH_LBD"/>
    <property type="match status" value="1"/>
</dbReference>
<dbReference type="PROSITE" id="PS50853">
    <property type="entry name" value="FN3"/>
    <property type="match status" value="2"/>
</dbReference>
<dbReference type="PROSITE" id="PS00107">
    <property type="entry name" value="PROTEIN_KINASE_ATP"/>
    <property type="match status" value="1"/>
</dbReference>
<dbReference type="PROSITE" id="PS50011">
    <property type="entry name" value="PROTEIN_KINASE_DOM"/>
    <property type="match status" value="1"/>
</dbReference>
<dbReference type="PROSITE" id="PS00109">
    <property type="entry name" value="PROTEIN_KINASE_TYR"/>
    <property type="match status" value="1"/>
</dbReference>
<dbReference type="PROSITE" id="PS00790">
    <property type="entry name" value="RECEPTOR_TYR_KIN_V_1"/>
    <property type="match status" value="1"/>
</dbReference>
<dbReference type="PROSITE" id="PS00791">
    <property type="entry name" value="RECEPTOR_TYR_KIN_V_2"/>
    <property type="match status" value="1"/>
</dbReference>
<dbReference type="PROSITE" id="PS50105">
    <property type="entry name" value="SAM_DOMAIN"/>
    <property type="match status" value="1"/>
</dbReference>
<gene>
    <name type="primary">Ephb1</name>
    <name type="synonym">Elk</name>
    <name type="synonym">Epth2</name>
</gene>
<organism>
    <name type="scientific">Rattus norvegicus</name>
    <name type="common">Rat</name>
    <dbReference type="NCBI Taxonomy" id="10116"/>
    <lineage>
        <taxon>Eukaryota</taxon>
        <taxon>Metazoa</taxon>
        <taxon>Chordata</taxon>
        <taxon>Craniata</taxon>
        <taxon>Vertebrata</taxon>
        <taxon>Euteleostomi</taxon>
        <taxon>Mammalia</taxon>
        <taxon>Eutheria</taxon>
        <taxon>Euarchontoglires</taxon>
        <taxon>Glires</taxon>
        <taxon>Rodentia</taxon>
        <taxon>Myomorpha</taxon>
        <taxon>Muroidea</taxon>
        <taxon>Muridae</taxon>
        <taxon>Murinae</taxon>
        <taxon>Rattus</taxon>
    </lineage>
</organism>
<keyword id="KW-0067">ATP-binding</keyword>
<keyword id="KW-0130">Cell adhesion</keyword>
<keyword id="KW-1003">Cell membrane</keyword>
<keyword id="KW-0966">Cell projection</keyword>
<keyword id="KW-0967">Endosome</keyword>
<keyword id="KW-0325">Glycoprotein</keyword>
<keyword id="KW-0418">Kinase</keyword>
<keyword id="KW-0472">Membrane</keyword>
<keyword id="KW-0524">Neurogenesis</keyword>
<keyword id="KW-0547">Nucleotide-binding</keyword>
<keyword id="KW-0597">Phosphoprotein</keyword>
<keyword id="KW-0675">Receptor</keyword>
<keyword id="KW-1185">Reference proteome</keyword>
<keyword id="KW-0677">Repeat</keyword>
<keyword id="KW-0732">Signal</keyword>
<keyword id="KW-0808">Transferase</keyword>
<keyword id="KW-0812">Transmembrane</keyword>
<keyword id="KW-1133">Transmembrane helix</keyword>
<keyword id="KW-0829">Tyrosine-protein kinase</keyword>
<keyword id="KW-0832">Ubl conjugation</keyword>
<comment type="function">
    <text evidence="3 4">Receptor tyrosine kinase which binds promiscuously transmembrane ephrin-B family ligands residing on adjacent cells, leading to contact-dependent bidirectional signaling into neighboring cells. The signaling pathway downstream of the receptor is referred to as forward signaling while the signaling pathway downstream of the ephrin ligand is referred to as reverse signaling. Cognate/functional ephrin ligands for this receptor include EFNB1, EFNB2 and EFNB3. During nervous system development, regulates retinal axon guidance redirecting ipsilaterally ventrotemporal retinal ganglion cells axons at the optic chiasm midline. This probably requires repulsive interaction with EFNB2. In the adult nervous system together with EFNB3, regulates chemotaxis, proliferation and polarity of the hippocampus neural progenitors. In addition to its role in axon guidance also plays an important redundant role with other ephrin-B receptors in development and maturation of dendritic spines and synapse formation. May also regulate angiogenesis. More generally, may play a role in targeted cell migration and adhesion. Upon activation by EFNB1 and probably other ephrin-B ligands activates the MAPK/ERK and the JNK signaling cascades to regulate cell migration and adhesion respectively (By similarity). Involved in the maintenance of the pool of satellite cells (muscle stem cells) by promoting their self-renewal and reducing their activation and differentiation (By similarity).</text>
</comment>
<comment type="catalytic activity">
    <reaction evidence="10">
        <text>L-tyrosyl-[protein] + ATP = O-phospho-L-tyrosyl-[protein] + ADP + H(+)</text>
        <dbReference type="Rhea" id="RHEA:10596"/>
        <dbReference type="Rhea" id="RHEA-COMP:10136"/>
        <dbReference type="Rhea" id="RHEA-COMP:20101"/>
        <dbReference type="ChEBI" id="CHEBI:15378"/>
        <dbReference type="ChEBI" id="CHEBI:30616"/>
        <dbReference type="ChEBI" id="CHEBI:46858"/>
        <dbReference type="ChEBI" id="CHEBI:61978"/>
        <dbReference type="ChEBI" id="CHEBI:456216"/>
        <dbReference type="EC" id="2.7.10.1"/>
    </reaction>
</comment>
<comment type="subunit">
    <text evidence="3 4">Heterotetramer upon binding of the ligand. The heterotetramer is composed of an ephrin dimer and a receptor dimer. Oligomerization is probably required to induce biological responses. Interacts with EPHB6; transphosphorylates EPHB6 to form an active signaling complex. Interacts with PICK1. Interacts (through Tyr-594) with NCK1 (via SH2 domain); activates the JUN cascade to regulate cell adhesion. The ligand-activated form interacts (through Tyr-928) with GRB7 and GRB10 (via SH2 domains). The ligand-activated form interacts (residues within the catalytic domain) with GRB2 (via SH2 domain). Interacts with GRB2, SHC1 and SRC; activates the MAPK/ERK cascade to regulate cell migration. Interacts with CBL; regulates receptor degradation through ubiquitination. Interacts with ACP1 (By similarity).</text>
</comment>
<comment type="subcellular location">
    <subcellularLocation>
        <location evidence="3">Cell membrane</location>
        <topology evidence="3">Single-pass type I membrane protein</topology>
    </subcellularLocation>
    <subcellularLocation>
        <location evidence="3">Early endosome membrane</location>
    </subcellularLocation>
    <subcellularLocation>
        <location evidence="4">Cell projection</location>
        <location evidence="4">Dendrite</location>
    </subcellularLocation>
</comment>
<comment type="tissue specificity">
    <text evidence="11">Restricted to brain and testes.</text>
</comment>
<comment type="PTM">
    <text evidence="3">Phosphorylated. Autophosphorylation is stimulated by the ligand EFNB1. Required for interaction with SH2 domain-containing interactors, for activation of the MAPK/ERK and JUN signaling cascades and for ubiquitination by CBL (By similarity).</text>
</comment>
<comment type="PTM">
    <text evidence="3 4">Ubiquitinated; (EFNB1)ligand-induced poly- and/or multi-ubiquitination by CBL is regulated by SRC and leads to lysosomal degradation.</text>
</comment>
<comment type="similarity">
    <text evidence="6">Belongs to the protein kinase superfamily. Tyr protein kinase family. Ephrin receptor subfamily.</text>
</comment>
<proteinExistence type="evidence at protein level"/>
<name>EPHB1_RAT</name>